<protein>
    <recommendedName>
        <fullName evidence="1">Ribosomal lysine N-methyltransferase 5</fullName>
        <ecNumber evidence="1">2.1.1.-</ecNumber>
    </recommendedName>
</protein>
<accession>A7A136</accession>
<sequence length="367" mass="41392">MAFKLWLLDEETIYEHVFERYTQLEGQSGKLAQDLGIQDRRGGVLEITFEPSGLEGGRKKKRVRRRNKASSVEEDQNVAVDSYHVSVGQSISSLRSSRDNGNSTTGYVLWSTTPFFINWLLYSTSAAPFRLGSQVEVTCGSSCEGHKLELPRLVDLTGADRGKRGILELGAGISGILPVILGNFVDTYVSTDQKGILNKLKDNIMENLSQLTRKRCISRSLRLELPTVEPVGDADITAASLPSKSTLHLEVAALDWEKINLQDKKTHSLHPELSLIGETCSSVYVIAMDVIYNEYLIDPFLKTLKQLKHWLQTTYNLQFHVLVGIHLRSQEVTTLFLEKAIIEYDFTVYDIVDQVIQESRFNFYLIT</sequence>
<evidence type="ECO:0000250" key="1">
    <source>
        <dbReference type="UniProtKB" id="Q12367"/>
    </source>
</evidence>
<evidence type="ECO:0000250" key="2">
    <source>
        <dbReference type="UniProtKB" id="Q9H867"/>
    </source>
</evidence>
<evidence type="ECO:0000305" key="3"/>
<name>RKM5_YEAS7</name>
<proteinExistence type="inferred from homology"/>
<gene>
    <name type="primary">RKM5</name>
    <name type="ORF">SCY_3710</name>
</gene>
<reference key="1">
    <citation type="journal article" date="2007" name="Proc. Natl. Acad. Sci. U.S.A.">
        <title>Genome sequencing and comparative analysis of Saccharomyces cerevisiae strain YJM789.</title>
        <authorList>
            <person name="Wei W."/>
            <person name="McCusker J.H."/>
            <person name="Hyman R.W."/>
            <person name="Jones T."/>
            <person name="Ning Y."/>
            <person name="Cao Z."/>
            <person name="Gu Z."/>
            <person name="Bruno D."/>
            <person name="Miranda M."/>
            <person name="Nguyen M."/>
            <person name="Wilhelmy J."/>
            <person name="Komp C."/>
            <person name="Tamse R."/>
            <person name="Wang X."/>
            <person name="Jia P."/>
            <person name="Luedi P."/>
            <person name="Oefner P.J."/>
            <person name="David L."/>
            <person name="Dietrich F.S."/>
            <person name="Li Y."/>
            <person name="Davis R.W."/>
            <person name="Steinmetz L.M."/>
        </authorList>
    </citation>
    <scope>NUCLEOTIDE SEQUENCE [LARGE SCALE GENOMIC DNA]</scope>
    <source>
        <strain>YJM789</strain>
    </source>
</reference>
<dbReference type="EC" id="2.1.1.-" evidence="1"/>
<dbReference type="EMBL" id="AAFW02000167">
    <property type="protein sequence ID" value="EDN59677.1"/>
    <property type="molecule type" value="Genomic_DNA"/>
</dbReference>
<dbReference type="HOGENOM" id="CLU_051532_0_0_1"/>
<dbReference type="Proteomes" id="UP000007060">
    <property type="component" value="Unassembled WGS sequence"/>
</dbReference>
<dbReference type="GO" id="GO:0005829">
    <property type="term" value="C:cytosol"/>
    <property type="evidence" value="ECO:0007669"/>
    <property type="project" value="TreeGrafter"/>
</dbReference>
<dbReference type="GO" id="GO:0032991">
    <property type="term" value="C:protein-containing complex"/>
    <property type="evidence" value="ECO:0007669"/>
    <property type="project" value="TreeGrafter"/>
</dbReference>
<dbReference type="GO" id="GO:0008757">
    <property type="term" value="F:S-adenosylmethionine-dependent methyltransferase activity"/>
    <property type="evidence" value="ECO:0007669"/>
    <property type="project" value="UniProtKB-ARBA"/>
</dbReference>
<dbReference type="GO" id="GO:0032259">
    <property type="term" value="P:methylation"/>
    <property type="evidence" value="ECO:0007669"/>
    <property type="project" value="UniProtKB-KW"/>
</dbReference>
<dbReference type="Gene3D" id="3.40.50.150">
    <property type="entry name" value="Vaccinia Virus protein VP39"/>
    <property type="match status" value="1"/>
</dbReference>
<dbReference type="InterPro" id="IPR019410">
    <property type="entry name" value="Methyltransf_16"/>
</dbReference>
<dbReference type="InterPro" id="IPR029063">
    <property type="entry name" value="SAM-dependent_MTases_sf"/>
</dbReference>
<dbReference type="PANTHER" id="PTHR14614">
    <property type="entry name" value="HEPATOCELLULAR CARCINOMA-ASSOCIATED ANTIGEN"/>
    <property type="match status" value="1"/>
</dbReference>
<dbReference type="PANTHER" id="PTHR14614:SF109">
    <property type="entry name" value="RIBOSOMAL LYSINE N-METHYLTRANSFERASE 5"/>
    <property type="match status" value="1"/>
</dbReference>
<comment type="function">
    <text evidence="1">S-adenosyl-L-methionine-dependent protein-lysine N-methyltransferase that monomethylates 60S ribosomal protein L1 (RPL1A and RPL1B) at 'Lys-46'.</text>
</comment>
<comment type="similarity">
    <text evidence="3">Belongs to the class I-like SAM-binding methyltransferase superfamily. RKM5 family.</text>
</comment>
<organism>
    <name type="scientific">Saccharomyces cerevisiae (strain YJM789)</name>
    <name type="common">Baker's yeast</name>
    <dbReference type="NCBI Taxonomy" id="307796"/>
    <lineage>
        <taxon>Eukaryota</taxon>
        <taxon>Fungi</taxon>
        <taxon>Dikarya</taxon>
        <taxon>Ascomycota</taxon>
        <taxon>Saccharomycotina</taxon>
        <taxon>Saccharomycetes</taxon>
        <taxon>Saccharomycetales</taxon>
        <taxon>Saccharomycetaceae</taxon>
        <taxon>Saccharomyces</taxon>
    </lineage>
</organism>
<feature type="chain" id="PRO_0000411048" description="Ribosomal lysine N-methyltransferase 5">
    <location>
        <begin position="1"/>
        <end position="367"/>
    </location>
</feature>
<feature type="binding site" evidence="2">
    <location>
        <position position="110"/>
    </location>
    <ligand>
        <name>S-adenosyl-L-methionine</name>
        <dbReference type="ChEBI" id="CHEBI:59789"/>
    </ligand>
</feature>
<feature type="binding site" evidence="2">
    <location>
        <begin position="170"/>
        <end position="172"/>
    </location>
    <ligand>
        <name>S-adenosyl-L-methionine</name>
        <dbReference type="ChEBI" id="CHEBI:59789"/>
    </ligand>
</feature>
<feature type="binding site" evidence="2">
    <location>
        <position position="192"/>
    </location>
    <ligand>
        <name>S-adenosyl-L-methionine</name>
        <dbReference type="ChEBI" id="CHEBI:59789"/>
    </ligand>
</feature>
<feature type="binding site" evidence="2">
    <location>
        <position position="256"/>
    </location>
    <ligand>
        <name>S-adenosyl-L-methionine</name>
        <dbReference type="ChEBI" id="CHEBI:59789"/>
    </ligand>
</feature>
<feature type="binding site" evidence="2">
    <location>
        <position position="288"/>
    </location>
    <ligand>
        <name>S-adenosyl-L-methionine</name>
        <dbReference type="ChEBI" id="CHEBI:59789"/>
    </ligand>
</feature>
<keyword id="KW-0489">Methyltransferase</keyword>
<keyword id="KW-0949">S-adenosyl-L-methionine</keyword>
<keyword id="KW-0808">Transferase</keyword>